<feature type="chain" id="PRO_0000216771" description="Haloalkane dehalogenase">
    <location>
        <begin position="1"/>
        <end position="310"/>
    </location>
</feature>
<feature type="domain" description="AB hydrolase-1" evidence="1">
    <location>
        <begin position="49"/>
        <end position="295"/>
    </location>
</feature>
<feature type="active site" description="Nucleophile">
    <location>
        <position position="124"/>
    </location>
</feature>
<feature type="active site" description="Proton donor">
    <location>
        <position position="260"/>
    </location>
</feature>
<feature type="active site" description="Proton acceptor">
    <location>
        <position position="289"/>
    </location>
</feature>
<feature type="binding site" evidence="2 3">
    <location>
        <position position="125"/>
    </location>
    <ligand>
        <name>chloride</name>
        <dbReference type="ChEBI" id="CHEBI:17996"/>
    </ligand>
</feature>
<feature type="binding site" evidence="2 3 11 12">
    <location>
        <position position="175"/>
    </location>
    <ligand>
        <name>chloride</name>
        <dbReference type="ChEBI" id="CHEBI:17996"/>
    </ligand>
</feature>
<feature type="helix" evidence="14">
    <location>
        <begin position="9"/>
        <end position="12"/>
    </location>
</feature>
<feature type="strand" evidence="14">
    <location>
        <begin position="23"/>
        <end position="27"/>
    </location>
</feature>
<feature type="strand" evidence="14">
    <location>
        <begin position="35"/>
        <end position="42"/>
    </location>
</feature>
<feature type="strand" evidence="14">
    <location>
        <begin position="49"/>
        <end position="52"/>
    </location>
</feature>
<feature type="helix" evidence="14">
    <location>
        <begin position="60"/>
        <end position="63"/>
    </location>
</feature>
<feature type="turn" evidence="14">
    <location>
        <begin position="64"/>
        <end position="66"/>
    </location>
</feature>
<feature type="helix" evidence="14">
    <location>
        <begin position="67"/>
        <end position="72"/>
    </location>
</feature>
<feature type="strand" evidence="14">
    <location>
        <begin position="76"/>
        <end position="80"/>
    </location>
</feature>
<feature type="strand" evidence="14">
    <location>
        <begin position="90"/>
        <end position="92"/>
    </location>
</feature>
<feature type="helix" evidence="14">
    <location>
        <begin position="94"/>
        <end position="96"/>
    </location>
</feature>
<feature type="helix" evidence="14">
    <location>
        <begin position="99"/>
        <end position="113"/>
    </location>
</feature>
<feature type="strand" evidence="14">
    <location>
        <begin position="117"/>
        <end position="122"/>
    </location>
</feature>
<feature type="helix" evidence="14">
    <location>
        <begin position="125"/>
        <end position="130"/>
    </location>
</feature>
<feature type="helix" evidence="14">
    <location>
        <begin position="134"/>
        <end position="136"/>
    </location>
</feature>
<feature type="helix" evidence="14">
    <location>
        <begin position="138"/>
        <end position="140"/>
    </location>
</feature>
<feature type="strand" evidence="14">
    <location>
        <begin position="141"/>
        <end position="148"/>
    </location>
</feature>
<feature type="turn" evidence="14">
    <location>
        <begin position="155"/>
        <end position="157"/>
    </location>
</feature>
<feature type="helix" evidence="14">
    <location>
        <begin position="160"/>
        <end position="163"/>
    </location>
</feature>
<feature type="turn" evidence="14">
    <location>
        <begin position="164"/>
        <end position="166"/>
    </location>
</feature>
<feature type="turn" evidence="14">
    <location>
        <begin position="169"/>
        <end position="171"/>
    </location>
</feature>
<feature type="helix" evidence="14">
    <location>
        <begin position="172"/>
        <end position="180"/>
    </location>
</feature>
<feature type="helix" evidence="14">
    <location>
        <begin position="187"/>
        <end position="194"/>
    </location>
</feature>
<feature type="helix" evidence="14">
    <location>
        <begin position="200"/>
        <end position="207"/>
    </location>
</feature>
<feature type="helix" evidence="14">
    <location>
        <begin position="213"/>
        <end position="215"/>
    </location>
</feature>
<feature type="helix" evidence="14">
    <location>
        <begin position="217"/>
        <end position="227"/>
    </location>
</feature>
<feature type="helix" evidence="14">
    <location>
        <begin position="231"/>
        <end position="246"/>
    </location>
</feature>
<feature type="strand" evidence="14">
    <location>
        <begin position="250"/>
        <end position="257"/>
    </location>
</feature>
<feature type="strand" evidence="14">
    <location>
        <begin position="261"/>
        <end position="264"/>
    </location>
</feature>
<feature type="helix" evidence="14">
    <location>
        <begin position="265"/>
        <end position="274"/>
    </location>
</feature>
<feature type="strand" evidence="14">
    <location>
        <begin position="282"/>
        <end position="284"/>
    </location>
</feature>
<feature type="helix" evidence="14">
    <location>
        <begin position="291"/>
        <end position="294"/>
    </location>
</feature>
<feature type="helix" evidence="14">
    <location>
        <begin position="295"/>
        <end position="308"/>
    </location>
</feature>
<accession>P22643</accession>
<proteinExistence type="evidence at protein level"/>
<keyword id="KW-0002">3D-structure</keyword>
<keyword id="KW-0216">Detoxification</keyword>
<keyword id="KW-0903">Direct protein sequencing</keyword>
<keyword id="KW-0378">Hydrolase</keyword>
<organism>
    <name type="scientific">Xanthobacter autotrophicus</name>
    <dbReference type="NCBI Taxonomy" id="280"/>
    <lineage>
        <taxon>Bacteria</taxon>
        <taxon>Pseudomonadati</taxon>
        <taxon>Pseudomonadota</taxon>
        <taxon>Alphaproteobacteria</taxon>
        <taxon>Hyphomicrobiales</taxon>
        <taxon>Xanthobacteraceae</taxon>
        <taxon>Xanthobacter</taxon>
    </lineage>
</organism>
<gene>
    <name type="primary">dhlA</name>
</gene>
<comment type="function">
    <text>Catalyzes hydrolytic cleavage of carbon-halogen bonds in halogenated aliphatic compounds, leading to the formation of the corresponding primary alcohols, halide ions and protons. Has a broad substrate specificity, which includes terminally mono- and di- chlorinated and brominated alkanes (up to C4 only). The highest activity was found with 1,2-dichloroethane, 1,3-dichloropropane, and 1,2-dibromoethane.</text>
</comment>
<comment type="catalytic activity">
    <reaction>
        <text>1-haloalkane + H2O = a halide anion + a primary alcohol + H(+)</text>
        <dbReference type="Rhea" id="RHEA:19081"/>
        <dbReference type="ChEBI" id="CHEBI:15377"/>
        <dbReference type="ChEBI" id="CHEBI:15378"/>
        <dbReference type="ChEBI" id="CHEBI:15734"/>
        <dbReference type="ChEBI" id="CHEBI:16042"/>
        <dbReference type="ChEBI" id="CHEBI:18060"/>
        <dbReference type="EC" id="3.8.1.5"/>
    </reaction>
</comment>
<comment type="catalytic activity">
    <reaction>
        <text>1,2-dichloroethane + H2O = 2-chloroethanol + chloride + H(+)</text>
        <dbReference type="Rhea" id="RHEA:25185"/>
        <dbReference type="ChEBI" id="CHEBI:15377"/>
        <dbReference type="ChEBI" id="CHEBI:15378"/>
        <dbReference type="ChEBI" id="CHEBI:17996"/>
        <dbReference type="ChEBI" id="CHEBI:27789"/>
        <dbReference type="ChEBI" id="CHEBI:28200"/>
        <dbReference type="EC" id="3.8.1.5"/>
    </reaction>
</comment>
<comment type="activity regulation">
    <text>Inhibited by thiol reagents such as p-chloromercuribenzoate and iodoacetamide.</text>
</comment>
<comment type="biophysicochemical properties">
    <phDependence>
        <text>Optimum pH is 8.2.</text>
    </phDependence>
    <temperatureDependence>
        <text>Optimum temperature is 37 degrees Celsius.</text>
    </temperatureDependence>
</comment>
<comment type="pathway">
    <text>Xenobiotic degradation; 1,2-dichloroethane degradation; glycolate from 1,2-dichloroethane: step 1/4.</text>
</comment>
<comment type="subunit">
    <text>Monomer.</text>
</comment>
<comment type="similarity">
    <text evidence="4">Belongs to the haloalkane dehalogenase family. Type 1 subfamily.</text>
</comment>
<evidence type="ECO:0000255" key="1"/>
<evidence type="ECO:0000269" key="2">
    <source>
    </source>
</evidence>
<evidence type="ECO:0000269" key="3">
    <source>
    </source>
</evidence>
<evidence type="ECO:0000305" key="4"/>
<evidence type="ECO:0007744" key="5">
    <source>
        <dbReference type="PDB" id="1B6G"/>
    </source>
</evidence>
<evidence type="ECO:0007744" key="6">
    <source>
        <dbReference type="PDB" id="1BE0"/>
    </source>
</evidence>
<evidence type="ECO:0007744" key="7">
    <source>
        <dbReference type="PDB" id="1BEE"/>
    </source>
</evidence>
<evidence type="ECO:0007744" key="8">
    <source>
        <dbReference type="PDB" id="1BEZ"/>
    </source>
</evidence>
<evidence type="ECO:0007744" key="9">
    <source>
        <dbReference type="PDB" id="1EDE"/>
    </source>
</evidence>
<evidence type="ECO:0007744" key="10">
    <source>
        <dbReference type="PDB" id="2DHC"/>
    </source>
</evidence>
<evidence type="ECO:0007744" key="11">
    <source>
        <dbReference type="PDB" id="2DHD"/>
    </source>
</evidence>
<evidence type="ECO:0007744" key="12">
    <source>
        <dbReference type="PDB" id="2DHE"/>
    </source>
</evidence>
<evidence type="ECO:0007744" key="13">
    <source>
        <dbReference type="PDB" id="2HAD"/>
    </source>
</evidence>
<evidence type="ECO:0007829" key="14">
    <source>
        <dbReference type="PDB" id="1B6G"/>
    </source>
</evidence>
<dbReference type="EC" id="3.8.1.5"/>
<dbReference type="EMBL" id="M26950">
    <property type="protein sequence ID" value="AAA88691.1"/>
    <property type="molecule type" value="Genomic_DNA"/>
</dbReference>
<dbReference type="PIR" id="B43718">
    <property type="entry name" value="B43718"/>
</dbReference>
<dbReference type="PDB" id="1B6G">
    <property type="method" value="X-ray"/>
    <property type="resolution" value="1.15 A"/>
    <property type="chains" value="A=3-310"/>
</dbReference>
<dbReference type="PDB" id="1BE0">
    <property type="method" value="X-ray"/>
    <property type="resolution" value="1.96 A"/>
    <property type="chains" value="A=3-310"/>
</dbReference>
<dbReference type="PDB" id="1BEE">
    <property type="method" value="X-ray"/>
    <property type="resolution" value="2.60 A"/>
    <property type="chains" value="A=3-310"/>
</dbReference>
<dbReference type="PDB" id="1BEZ">
    <property type="method" value="X-ray"/>
    <property type="resolution" value="2.10 A"/>
    <property type="chains" value="A=3-310"/>
</dbReference>
<dbReference type="PDB" id="1CIJ">
    <property type="method" value="X-ray"/>
    <property type="resolution" value="2.30 A"/>
    <property type="chains" value="A=3-310"/>
</dbReference>
<dbReference type="PDB" id="1EDB">
    <property type="method" value="X-ray"/>
    <property type="resolution" value="2.01 A"/>
    <property type="chains" value="A=1-310"/>
</dbReference>
<dbReference type="PDB" id="1EDD">
    <property type="method" value="X-ray"/>
    <property type="resolution" value="2.19 A"/>
    <property type="chains" value="A=1-310"/>
</dbReference>
<dbReference type="PDB" id="1EDE">
    <property type="method" value="X-ray"/>
    <property type="resolution" value="1.90 A"/>
    <property type="chains" value="A=1-310"/>
</dbReference>
<dbReference type="PDB" id="1HDE">
    <property type="method" value="X-ray"/>
    <property type="resolution" value="2.70 A"/>
    <property type="chains" value="A/B=1-310"/>
</dbReference>
<dbReference type="PDB" id="2DHC">
    <property type="method" value="X-ray"/>
    <property type="resolution" value="2.30 A"/>
    <property type="chains" value="A=1-310"/>
</dbReference>
<dbReference type="PDB" id="2DHD">
    <property type="method" value="X-ray"/>
    <property type="resolution" value="2.13 A"/>
    <property type="chains" value="A=1-310"/>
</dbReference>
<dbReference type="PDB" id="2DHE">
    <property type="method" value="X-ray"/>
    <property type="resolution" value="2.13 A"/>
    <property type="chains" value="A=1-310"/>
</dbReference>
<dbReference type="PDB" id="2EDA">
    <property type="method" value="X-ray"/>
    <property type="resolution" value="2.19 A"/>
    <property type="chains" value="A=1-310"/>
</dbReference>
<dbReference type="PDB" id="2EDC">
    <property type="method" value="X-ray"/>
    <property type="resolution" value="2.30 A"/>
    <property type="chains" value="A=1-310"/>
</dbReference>
<dbReference type="PDB" id="2HAD">
    <property type="method" value="X-ray"/>
    <property type="resolution" value="1.90 A"/>
    <property type="chains" value="A=1-310"/>
</dbReference>
<dbReference type="PDB" id="2PKY">
    <property type="method" value="X-ray"/>
    <property type="resolution" value="1.55 A"/>
    <property type="chains" value="X=1-310"/>
</dbReference>
<dbReference type="PDB" id="2YXP">
    <property type="method" value="X-ray"/>
    <property type="resolution" value="1.53 A"/>
    <property type="chains" value="X=1-310"/>
</dbReference>
<dbReference type="PDBsum" id="1B6G"/>
<dbReference type="PDBsum" id="1BE0"/>
<dbReference type="PDBsum" id="1BEE"/>
<dbReference type="PDBsum" id="1BEZ"/>
<dbReference type="PDBsum" id="1CIJ"/>
<dbReference type="PDBsum" id="1EDB"/>
<dbReference type="PDBsum" id="1EDD"/>
<dbReference type="PDBsum" id="1EDE"/>
<dbReference type="PDBsum" id="1HDE"/>
<dbReference type="PDBsum" id="2DHC"/>
<dbReference type="PDBsum" id="2DHD"/>
<dbReference type="PDBsum" id="2DHE"/>
<dbReference type="PDBsum" id="2EDA"/>
<dbReference type="PDBsum" id="2EDC"/>
<dbReference type="PDBsum" id="2HAD"/>
<dbReference type="PDBsum" id="2PKY"/>
<dbReference type="PDBsum" id="2YXP"/>
<dbReference type="SMR" id="P22643"/>
<dbReference type="ESTHER" id="xanau-halo1">
    <property type="family name" value="Haloalkane_dehalogenase-HLD1"/>
</dbReference>
<dbReference type="MEROPS" id="S33.990"/>
<dbReference type="KEGG" id="ag:AAA88691"/>
<dbReference type="BioCyc" id="MetaCyc:DHLAXANAU-MONOMER"/>
<dbReference type="BRENDA" id="3.8.1.5">
    <property type="organism ID" value="1641"/>
</dbReference>
<dbReference type="UniPathway" id="UPA00265">
    <property type="reaction ID" value="UER00387"/>
</dbReference>
<dbReference type="EvolutionaryTrace" id="P22643"/>
<dbReference type="GO" id="GO:0004301">
    <property type="term" value="F:epoxide hydrolase activity"/>
    <property type="evidence" value="ECO:0007669"/>
    <property type="project" value="TreeGrafter"/>
</dbReference>
<dbReference type="GO" id="GO:0018786">
    <property type="term" value="F:haloalkane dehalogenase activity"/>
    <property type="evidence" value="ECO:0007669"/>
    <property type="project" value="UniProtKB-UniRule"/>
</dbReference>
<dbReference type="GO" id="GO:0019260">
    <property type="term" value="P:1,2-dichloroethane catabolic process"/>
    <property type="evidence" value="ECO:0007669"/>
    <property type="project" value="UniProtKB-UniPathway"/>
</dbReference>
<dbReference type="GO" id="GO:0009636">
    <property type="term" value="P:response to toxic substance"/>
    <property type="evidence" value="ECO:0007669"/>
    <property type="project" value="UniProtKB-KW"/>
</dbReference>
<dbReference type="Gene3D" id="3.40.50.1820">
    <property type="entry name" value="alpha/beta hydrolase"/>
    <property type="match status" value="1"/>
</dbReference>
<dbReference type="HAMAP" id="MF_01230">
    <property type="entry name" value="Haloalk_dehal_type1"/>
    <property type="match status" value="1"/>
</dbReference>
<dbReference type="InterPro" id="IPR000073">
    <property type="entry name" value="AB_hydrolase_1"/>
</dbReference>
<dbReference type="InterPro" id="IPR029058">
    <property type="entry name" value="AB_hydrolase_fold"/>
</dbReference>
<dbReference type="InterPro" id="IPR000639">
    <property type="entry name" value="Epox_hydrolase-like"/>
</dbReference>
<dbReference type="InterPro" id="IPR051340">
    <property type="entry name" value="Haloalkane_dehalogenase"/>
</dbReference>
<dbReference type="InterPro" id="IPR023489">
    <property type="entry name" value="Haloalkane_dehalogenase_1"/>
</dbReference>
<dbReference type="NCBIfam" id="NF002043">
    <property type="entry name" value="PRK00870.1"/>
    <property type="match status" value="1"/>
</dbReference>
<dbReference type="PANTHER" id="PTHR42977:SF3">
    <property type="entry name" value="AB HYDROLASE-1 DOMAIN-CONTAINING PROTEIN"/>
    <property type="match status" value="1"/>
</dbReference>
<dbReference type="PANTHER" id="PTHR42977">
    <property type="entry name" value="HYDROLASE-RELATED"/>
    <property type="match status" value="1"/>
</dbReference>
<dbReference type="Pfam" id="PF00561">
    <property type="entry name" value="Abhydrolase_1"/>
    <property type="match status" value="1"/>
</dbReference>
<dbReference type="PRINTS" id="PR00111">
    <property type="entry name" value="ABHYDROLASE"/>
</dbReference>
<dbReference type="PRINTS" id="PR00412">
    <property type="entry name" value="EPOXHYDRLASE"/>
</dbReference>
<dbReference type="SUPFAM" id="SSF53474">
    <property type="entry name" value="alpha/beta-Hydrolases"/>
    <property type="match status" value="1"/>
</dbReference>
<sequence length="310" mass="35144">MINAIRTPDQRFSNLDQYPFSPNYLDDLPGYPGLRAHYLDEGNSDAEDVFLCLHGEPTWSYLYRKMIPVFAESGARVIAPDFFGFGKSDKPVDEEDYTFEFHRNFLLALIERLDLRNITLVVQDWGGFLGLTLPMADPSRFKRLIIMNACLMTDPVTQPAFSAFVTQPADGFTAWKYDLVTPSDLRLDQFMKRWAPTLTEAEASAYAAPFPDTSYQAGVRKFPKMVAQRDQACIDISTEAISFWQNDWNGQTFMAIGMKDKLLGPDVMYPMKALINGCPEPLEIADAGHFVQEFGEQVAREALKHFAETE</sequence>
<protein>
    <recommendedName>
        <fullName>Haloalkane dehalogenase</fullName>
        <ecNumber>3.8.1.5</ecNumber>
    </recommendedName>
</protein>
<name>DHLA_XANAU</name>
<reference key="1">
    <citation type="journal article" date="1989" name="J. Bacteriol.">
        <title>Cloning of 1,2-dichloroethane degradation genes of Xanthobacter autotrophicus GJ10 and expression and sequencing of the dhlA gene.</title>
        <authorList>
            <person name="Janssen D.B."/>
            <person name="Pries F."/>
            <person name="van der Ploeg J."/>
            <person name="Kazemier B."/>
            <person name="Terpstra P."/>
            <person name="Witholt B."/>
        </authorList>
    </citation>
    <scope>NUCLEOTIDE SEQUENCE [GENOMIC DNA]</scope>
    <source>
        <strain>GJ10</strain>
    </source>
</reference>
<reference key="2">
    <citation type="journal article" date="1985" name="J. Bacteriol.">
        <title>Purification and characterization of hydrolytic haloalkane dehalogenase from Xanthobacter autotrophicus GJ10.</title>
        <authorList>
            <person name="Keuning S."/>
            <person name="Janssen D.B."/>
            <person name="Witholt B."/>
        </authorList>
    </citation>
    <scope>PROTEIN SEQUENCE OF 1-10</scope>
</reference>
<reference key="3">
    <citation type="journal article" date="1988" name="J. Mol. Biol.">
        <title>Crystallization of haloalkane dehalogenase from Xanthobacter autotrophicus GJ10.</title>
        <authorList>
            <person name="Rozeboom H.J."/>
            <person name="Kingma J."/>
            <person name="Janssen D.B."/>
            <person name="Dijkstra B.W."/>
        </authorList>
    </citation>
    <scope>CRYSTALLIZATION</scope>
    <source>
        <strain>GJ10</strain>
    </source>
</reference>
<reference evidence="13" key="4">
    <citation type="journal article" date="1991" name="EMBO J.">
        <title>Crystal structure of haloalkane dehalogenase: an enzyme to detoxify halogenated alkanes.</title>
        <authorList>
            <person name="Franken S.M."/>
            <person name="Rozeboom H.J."/>
            <person name="Kalk K.H."/>
            <person name="Dijkstra B.W."/>
        </authorList>
    </citation>
    <scope>X-RAY CRYSTALLOGRAPHY (2.4 ANGSTROMS)</scope>
    <scope>SEQUENCE REVISION TO 120</scope>
    <source>
        <strain>GJ10</strain>
    </source>
</reference>
<reference evidence="9" key="5">
    <citation type="journal article" date="1993" name="J. Mol. Biol.">
        <title>Refined X-ray structures of haloalkane dehalogenase at pH 6.2 and pH 8.2 and implications for the reaction mechanism.</title>
        <authorList>
            <person name="Verschueren K.H.G."/>
            <person name="Franken S.M."/>
            <person name="Rozeboom H.J."/>
            <person name="Kalk K.H."/>
            <person name="Dijkstra B.W."/>
        </authorList>
    </citation>
    <scope>X-RAY CRYSTALLOGRAPHY (1.9 ANGSTROMS)</scope>
</reference>
<reference evidence="10 11 12" key="6">
    <citation type="journal article" date="1993" name="Nature">
        <title>Crystallographic analysis of the catalytic mechanism of haloalkane dehalogenase.</title>
        <authorList>
            <person name="Verschueren K.H.G."/>
            <person name="Seljee F."/>
            <person name="Rozeboom H.J."/>
            <person name="Kalk K.H."/>
            <person name="Dijkstra B.W."/>
        </authorList>
    </citation>
    <scope>X-RAY CRYSTALLOGRAPHY (2.13 ANGSTROMS) IN COMPLEXES WITH 1,2-DICHLOROETHANE AND CHLORIDE</scope>
    <source>
        <strain>GJ10</strain>
    </source>
</reference>
<reference evidence="6 7 8" key="7">
    <citation type="journal article" date="1998" name="Biochemistry">
        <title>Kinetic analysis and X-ray structure of haloalkane dehalogenase with a modified halide-binding site.</title>
        <authorList>
            <person name="Krooshof G.H."/>
            <person name="Ridder I.S."/>
            <person name="Tepper A.W.J.W."/>
            <person name="Vos G.J."/>
            <person name="Rozeboom H.J."/>
            <person name="Kalk K.H."/>
            <person name="Dijkstra B.W."/>
            <person name="Janssen D.B."/>
        </authorList>
    </citation>
    <scope>X-RAY CRYSTALLOGRAPHY (1.96 ANGSTROMS)</scope>
</reference>
<reference key="8">
    <citation type="journal article" date="1999" name="Biochemistry">
        <title>Crystallographic and kinetic evidence of a collision complex formed during halide import in haloalkane dehalogenase.</title>
        <authorList>
            <person name="Pikkemaat M.G."/>
            <person name="Ridder I.S."/>
            <person name="Rozeboom H.J."/>
            <person name="Kalk K.H."/>
            <person name="Dijkstra B.W."/>
            <person name="Janssen D.B."/>
        </authorList>
    </citation>
    <scope>X-RAY CRYSTALLOGRAPHY (2.3 ANGSTROMS)</scope>
</reference>
<reference evidence="5" key="9">
    <citation type="journal article" date="1999" name="Acta Crystallogr. D">
        <title>Haloalkane dehalogenase from Xanthobacter autotrophicus GJ10 refined at 1.15 A resolution.</title>
        <authorList>
            <person name="Ridder I.S."/>
            <person name="Rozeboom H.J."/>
            <person name="Dijkstra B.W."/>
        </authorList>
    </citation>
    <scope>X-RAY CRYSTALLOGRAPHY (1.15 ANGSTROMS) IN COMPLEX WITH CHLORIDE</scope>
    <source>
        <strain>GJ10</strain>
    </source>
</reference>